<evidence type="ECO:0000255" key="1">
    <source>
        <dbReference type="HAMAP-Rule" id="MF_01310"/>
    </source>
</evidence>
<evidence type="ECO:0000305" key="2"/>
<feature type="chain" id="PRO_0000123104" description="Small ribosomal subunit protein uS11">
    <location>
        <begin position="1"/>
        <end position="133"/>
    </location>
</feature>
<accession>Q5WLN6</accession>
<dbReference type="EMBL" id="AP006627">
    <property type="protein sequence ID" value="BAD62719.1"/>
    <property type="molecule type" value="Genomic_DNA"/>
</dbReference>
<dbReference type="SMR" id="Q5WLN6"/>
<dbReference type="STRING" id="66692.ABC0176"/>
<dbReference type="KEGG" id="bcl:ABC0176"/>
<dbReference type="eggNOG" id="COG0100">
    <property type="taxonomic scope" value="Bacteria"/>
</dbReference>
<dbReference type="HOGENOM" id="CLU_072439_5_0_9"/>
<dbReference type="Proteomes" id="UP000001168">
    <property type="component" value="Chromosome"/>
</dbReference>
<dbReference type="GO" id="GO:1990904">
    <property type="term" value="C:ribonucleoprotein complex"/>
    <property type="evidence" value="ECO:0007669"/>
    <property type="project" value="UniProtKB-KW"/>
</dbReference>
<dbReference type="GO" id="GO:0005840">
    <property type="term" value="C:ribosome"/>
    <property type="evidence" value="ECO:0007669"/>
    <property type="project" value="UniProtKB-KW"/>
</dbReference>
<dbReference type="GO" id="GO:0019843">
    <property type="term" value="F:rRNA binding"/>
    <property type="evidence" value="ECO:0007669"/>
    <property type="project" value="UniProtKB-UniRule"/>
</dbReference>
<dbReference type="GO" id="GO:0003735">
    <property type="term" value="F:structural constituent of ribosome"/>
    <property type="evidence" value="ECO:0007669"/>
    <property type="project" value="InterPro"/>
</dbReference>
<dbReference type="GO" id="GO:0006412">
    <property type="term" value="P:translation"/>
    <property type="evidence" value="ECO:0007669"/>
    <property type="project" value="UniProtKB-UniRule"/>
</dbReference>
<dbReference type="FunFam" id="3.30.420.80:FF:000001">
    <property type="entry name" value="30S ribosomal protein S11"/>
    <property type="match status" value="1"/>
</dbReference>
<dbReference type="Gene3D" id="3.30.420.80">
    <property type="entry name" value="Ribosomal protein S11"/>
    <property type="match status" value="1"/>
</dbReference>
<dbReference type="HAMAP" id="MF_01310">
    <property type="entry name" value="Ribosomal_uS11"/>
    <property type="match status" value="1"/>
</dbReference>
<dbReference type="InterPro" id="IPR001971">
    <property type="entry name" value="Ribosomal_uS11"/>
</dbReference>
<dbReference type="InterPro" id="IPR019981">
    <property type="entry name" value="Ribosomal_uS11_bac-type"/>
</dbReference>
<dbReference type="InterPro" id="IPR018102">
    <property type="entry name" value="Ribosomal_uS11_CS"/>
</dbReference>
<dbReference type="InterPro" id="IPR036967">
    <property type="entry name" value="Ribosomal_uS11_sf"/>
</dbReference>
<dbReference type="NCBIfam" id="NF003698">
    <property type="entry name" value="PRK05309.1"/>
    <property type="match status" value="1"/>
</dbReference>
<dbReference type="NCBIfam" id="TIGR03632">
    <property type="entry name" value="uS11_bact"/>
    <property type="match status" value="1"/>
</dbReference>
<dbReference type="PANTHER" id="PTHR11759">
    <property type="entry name" value="40S RIBOSOMAL PROTEIN S14/30S RIBOSOMAL PROTEIN S11"/>
    <property type="match status" value="1"/>
</dbReference>
<dbReference type="Pfam" id="PF00411">
    <property type="entry name" value="Ribosomal_S11"/>
    <property type="match status" value="1"/>
</dbReference>
<dbReference type="PIRSF" id="PIRSF002131">
    <property type="entry name" value="Ribosomal_S11"/>
    <property type="match status" value="1"/>
</dbReference>
<dbReference type="SUPFAM" id="SSF53137">
    <property type="entry name" value="Translational machinery components"/>
    <property type="match status" value="1"/>
</dbReference>
<dbReference type="PROSITE" id="PS00054">
    <property type="entry name" value="RIBOSOMAL_S11"/>
    <property type="match status" value="1"/>
</dbReference>
<comment type="function">
    <text evidence="1">Located on the platform of the 30S subunit, it bridges several disparate RNA helices of the 16S rRNA. Forms part of the Shine-Dalgarno cleft in the 70S ribosome.</text>
</comment>
<comment type="subunit">
    <text evidence="1">Part of the 30S ribosomal subunit. Interacts with proteins S7 and S18. Binds to IF-3.</text>
</comment>
<comment type="similarity">
    <text evidence="1">Belongs to the universal ribosomal protein uS11 family.</text>
</comment>
<name>RS11_SHOC1</name>
<sequence>MKNMAKKTNTRPKRRQRKNIDSGVAHIRSTFNNTIVTITDPHGNAISWASAGALGFKGSRKSTPFAAQMAAESAAKTAMEHGMKTIEVSVKGPGAGREAAIRSLQAVGLEVNMIKDVTPVPHNGCRPPKRRRV</sequence>
<organism>
    <name type="scientific">Shouchella clausii (strain KSM-K16)</name>
    <name type="common">Alkalihalobacillus clausii</name>
    <dbReference type="NCBI Taxonomy" id="66692"/>
    <lineage>
        <taxon>Bacteria</taxon>
        <taxon>Bacillati</taxon>
        <taxon>Bacillota</taxon>
        <taxon>Bacilli</taxon>
        <taxon>Bacillales</taxon>
        <taxon>Bacillaceae</taxon>
        <taxon>Shouchella</taxon>
    </lineage>
</organism>
<keyword id="KW-1185">Reference proteome</keyword>
<keyword id="KW-0687">Ribonucleoprotein</keyword>
<keyword id="KW-0689">Ribosomal protein</keyword>
<keyword id="KW-0694">RNA-binding</keyword>
<keyword id="KW-0699">rRNA-binding</keyword>
<reference key="1">
    <citation type="submission" date="2003-10" db="EMBL/GenBank/DDBJ databases">
        <title>The complete genome sequence of the alkaliphilic Bacillus clausii KSM-K16.</title>
        <authorList>
            <person name="Takaki Y."/>
            <person name="Kageyama Y."/>
            <person name="Shimamura S."/>
            <person name="Suzuki H."/>
            <person name="Nishi S."/>
            <person name="Hatada Y."/>
            <person name="Kawai S."/>
            <person name="Ito S."/>
            <person name="Horikoshi K."/>
        </authorList>
    </citation>
    <scope>NUCLEOTIDE SEQUENCE [LARGE SCALE GENOMIC DNA]</scope>
    <source>
        <strain>KSM-K16</strain>
    </source>
</reference>
<protein>
    <recommendedName>
        <fullName evidence="1">Small ribosomal subunit protein uS11</fullName>
    </recommendedName>
    <alternativeName>
        <fullName evidence="2">30S ribosomal protein S11</fullName>
    </alternativeName>
</protein>
<gene>
    <name evidence="1" type="primary">rpsK</name>
    <name type="ordered locus">ABC0176</name>
</gene>
<proteinExistence type="inferred from homology"/>